<keyword id="KW-0998">Cell outer membrane</keyword>
<keyword id="KW-0472">Membrane</keyword>
<keyword id="KW-1185">Reference proteome</keyword>
<keyword id="KW-0732">Signal</keyword>
<organism>
    <name type="scientific">Xanthomonas oryzae pv. oryzae (strain KACC10331 / KXO85)</name>
    <dbReference type="NCBI Taxonomy" id="291331"/>
    <lineage>
        <taxon>Bacteria</taxon>
        <taxon>Pseudomonadati</taxon>
        <taxon>Pseudomonadota</taxon>
        <taxon>Gammaproteobacteria</taxon>
        <taxon>Lysobacterales</taxon>
        <taxon>Lysobacteraceae</taxon>
        <taxon>Xanthomonas</taxon>
    </lineage>
</organism>
<name>LPTD_XANOR</name>
<evidence type="ECO:0000255" key="1">
    <source>
        <dbReference type="HAMAP-Rule" id="MF_01411"/>
    </source>
</evidence>
<evidence type="ECO:0000305" key="2"/>
<dbReference type="EMBL" id="AE013598">
    <property type="protein sequence ID" value="AAW76999.1"/>
    <property type="status" value="ALT_INIT"/>
    <property type="molecule type" value="Genomic_DNA"/>
</dbReference>
<dbReference type="SMR" id="Q5GWC2"/>
<dbReference type="STRING" id="291331.XOO3745"/>
<dbReference type="KEGG" id="xoo:XOO3745"/>
<dbReference type="HOGENOM" id="CLU_009039_0_0_6"/>
<dbReference type="Proteomes" id="UP000006735">
    <property type="component" value="Chromosome"/>
</dbReference>
<dbReference type="GO" id="GO:0009279">
    <property type="term" value="C:cell outer membrane"/>
    <property type="evidence" value="ECO:0007669"/>
    <property type="project" value="UniProtKB-SubCell"/>
</dbReference>
<dbReference type="GO" id="GO:1990351">
    <property type="term" value="C:transporter complex"/>
    <property type="evidence" value="ECO:0007669"/>
    <property type="project" value="TreeGrafter"/>
</dbReference>
<dbReference type="GO" id="GO:0043165">
    <property type="term" value="P:Gram-negative-bacterium-type cell outer membrane assembly"/>
    <property type="evidence" value="ECO:0007669"/>
    <property type="project" value="UniProtKB-UniRule"/>
</dbReference>
<dbReference type="GO" id="GO:0015920">
    <property type="term" value="P:lipopolysaccharide transport"/>
    <property type="evidence" value="ECO:0007669"/>
    <property type="project" value="InterPro"/>
</dbReference>
<dbReference type="Gene3D" id="2.60.450.10">
    <property type="entry name" value="Lipopolysaccharide (LPS) transport protein A like domain"/>
    <property type="match status" value="1"/>
</dbReference>
<dbReference type="HAMAP" id="MF_01411">
    <property type="entry name" value="LPS_assembly_LptD"/>
    <property type="match status" value="1"/>
</dbReference>
<dbReference type="InterPro" id="IPR020889">
    <property type="entry name" value="LipoPS_assembly_LptD"/>
</dbReference>
<dbReference type="InterPro" id="IPR050218">
    <property type="entry name" value="LptD"/>
</dbReference>
<dbReference type="InterPro" id="IPR007543">
    <property type="entry name" value="LptD_C"/>
</dbReference>
<dbReference type="InterPro" id="IPR005653">
    <property type="entry name" value="OstA-like_N"/>
</dbReference>
<dbReference type="NCBIfam" id="NF003358">
    <property type="entry name" value="PRK04423.1"/>
    <property type="match status" value="1"/>
</dbReference>
<dbReference type="PANTHER" id="PTHR30189">
    <property type="entry name" value="LPS-ASSEMBLY PROTEIN"/>
    <property type="match status" value="1"/>
</dbReference>
<dbReference type="PANTHER" id="PTHR30189:SF1">
    <property type="entry name" value="LPS-ASSEMBLY PROTEIN LPTD"/>
    <property type="match status" value="1"/>
</dbReference>
<dbReference type="Pfam" id="PF04453">
    <property type="entry name" value="LptD"/>
    <property type="match status" value="1"/>
</dbReference>
<dbReference type="Pfam" id="PF03968">
    <property type="entry name" value="LptD_N"/>
    <property type="match status" value="1"/>
</dbReference>
<accession>Q5GWC2</accession>
<comment type="function">
    <text evidence="1">Together with LptE, is involved in the assembly of lipopolysaccharide (LPS) at the surface of the outer membrane.</text>
</comment>
<comment type="subunit">
    <text evidence="1">Component of the lipopolysaccharide transport and assembly complex. Interacts with LptE and LptA.</text>
</comment>
<comment type="subcellular location">
    <subcellularLocation>
        <location evidence="1">Cell outer membrane</location>
    </subcellularLocation>
</comment>
<comment type="similarity">
    <text evidence="1">Belongs to the LptD family.</text>
</comment>
<comment type="sequence caution" evidence="2">
    <conflict type="erroneous initiation">
        <sequence resource="EMBL-CDS" id="AAW76999"/>
    </conflict>
</comment>
<gene>
    <name evidence="1" type="primary">lptD</name>
    <name type="synonym">imp</name>
    <name type="synonym">ostA</name>
    <name type="ordered locus">XOO3745</name>
</gene>
<feature type="signal peptide" evidence="1">
    <location>
        <begin position="1"/>
        <end position="22"/>
    </location>
</feature>
<feature type="chain" id="PRO_0000020298" description="LPS-assembly protein LptD">
    <location>
        <begin position="23"/>
        <end position="813"/>
    </location>
</feature>
<protein>
    <recommendedName>
        <fullName evidence="1">LPS-assembly protein LptD</fullName>
    </recommendedName>
</protein>
<proteinExistence type="inferred from homology"/>
<sequence>MRRALRLLPLPLSIAICLPAMAADKPFNWGLCPTVDPLPGFDGAPAADPKAAEMRQQLPTDIEGDQLSGTSTTPQYQGNVALKRGDQFLGADNLRMDTETGNYIAEGNVRYQDTSFRMVADRAEGNQDTDTHKVTNIRYQLVERRGNGDAESVDLQGQVGQMHRSTYTTCDPSQPIWRVRAPEIDVDNGEGFGTARNAVLQIGNVPVLYFPWFKFPIDDRRQTGLLFPQFGLSRRNGFDYLQPIYLNLAPNYDATLLPRYMSKRGFMFGTEFRYLYEGGRGEVTGNYLPNDKLRDKDRGSVFYSGYHNVNSNWQARSSISWVSDTRYVEDFTSRLNGMGSASSLQSTVGIYGTGETWTAGLMAERWQLTDYTLDERSLPYNRQPRAYFNWEKPFGIFEAGVYAEAVRFTHDDSYFVQPPSPSVPGEANNRDNNDKYVRTNIRNQEYGSGSRLDLKPYVSMPLSGAAWFFTPTLAWRYTAYQLDSTLAKTGPLTGDRSPSRSLPIASVDAGLYFDRETSLLGTNYLNTLEPRMYYLYVPYRDQDDLPVFDTRPFTFSYGQLFRDTRYTGADRQNDANQLTLAVTSRWLRQDDGREKLSLSAGQILYFSDSRVTINNSTNAVAGSEQTIDQGKSAWVVDANYMINDRWSMGATYQWNPNSRKEDLASLRTRYLLDNDGIINLAYRYRRNLIDNSDQLKQADFSFLYPINPSWSAVGRYYYSLQDRKPLEIIGGVQWDSCCLAVRGLVRRFVRNRDGQMDNSIQIEFVLKGLSSFGQNTDRTLRRAILGYYRDDLYLVPPSNTTTNPDDYDPNLIP</sequence>
<reference key="1">
    <citation type="journal article" date="2005" name="Nucleic Acids Res.">
        <title>The genome sequence of Xanthomonas oryzae pathovar oryzae KACC10331, the bacterial blight pathogen of rice.</title>
        <authorList>
            <person name="Lee B.-M."/>
            <person name="Park Y.-J."/>
            <person name="Park D.-S."/>
            <person name="Kang H.-W."/>
            <person name="Kim J.-G."/>
            <person name="Song E.-S."/>
            <person name="Park I.-C."/>
            <person name="Yoon U.-H."/>
            <person name="Hahn J.-H."/>
            <person name="Koo B.-S."/>
            <person name="Lee G.-B."/>
            <person name="Kim H."/>
            <person name="Park H.-S."/>
            <person name="Yoon K.-O."/>
            <person name="Kim J.-H."/>
            <person name="Jung C.-H."/>
            <person name="Koh N.-H."/>
            <person name="Seo J.-S."/>
            <person name="Go S.-J."/>
        </authorList>
    </citation>
    <scope>NUCLEOTIDE SEQUENCE [LARGE SCALE GENOMIC DNA]</scope>
    <source>
        <strain>KACC10331 / KXO85</strain>
    </source>
</reference>